<name>GCH4_PSEPG</name>
<sequence length="301" mass="33077">MTQLKLPDIAAQTQAYAVPLNWVGMCGIALPVQFEGRTAAAKVDAGVSLVDGSSRGIHMSRLYLALGSLEHQPLTPLAIRQLLEDFLSSHASLSSAAYLRFSFEHLLNRPALISPLAGWKSYAVTVDTRIENEVFHVELSVSVPYSSTCPCSAALARQLIQQQFQTHFSEQKIEKAAVLQWLGSAEGIVATPHSQRSTAQVQVRLNSNQQVLPITELIDRIEASLGTAVQTAVKRADEQAFALANGQNLMFCEDAARRLHQALRQIEWSKAFKLRVEHAESLHAHDAVATSQWQWDVSCAV</sequence>
<evidence type="ECO:0000255" key="1">
    <source>
        <dbReference type="HAMAP-Rule" id="MF_01527"/>
    </source>
</evidence>
<proteinExistence type="inferred from homology"/>
<organism>
    <name type="scientific">Pseudomonas putida (strain GB-1)</name>
    <dbReference type="NCBI Taxonomy" id="76869"/>
    <lineage>
        <taxon>Bacteria</taxon>
        <taxon>Pseudomonadati</taxon>
        <taxon>Pseudomonadota</taxon>
        <taxon>Gammaproteobacteria</taxon>
        <taxon>Pseudomonadales</taxon>
        <taxon>Pseudomonadaceae</taxon>
        <taxon>Pseudomonas</taxon>
    </lineage>
</organism>
<reference key="1">
    <citation type="submission" date="2008-01" db="EMBL/GenBank/DDBJ databases">
        <title>Complete sequence of Pseudomonas putida GB-1.</title>
        <authorList>
            <consortium name="US DOE Joint Genome Institute"/>
            <person name="Copeland A."/>
            <person name="Lucas S."/>
            <person name="Lapidus A."/>
            <person name="Barry K."/>
            <person name="Glavina del Rio T."/>
            <person name="Dalin E."/>
            <person name="Tice H."/>
            <person name="Pitluck S."/>
            <person name="Bruce D."/>
            <person name="Goodwin L."/>
            <person name="Chertkov O."/>
            <person name="Brettin T."/>
            <person name="Detter J.C."/>
            <person name="Han C."/>
            <person name="Kuske C.R."/>
            <person name="Schmutz J."/>
            <person name="Larimer F."/>
            <person name="Land M."/>
            <person name="Hauser L."/>
            <person name="Kyrpides N."/>
            <person name="Kim E."/>
            <person name="McCarthy J.K."/>
            <person name="Richardson P."/>
        </authorList>
    </citation>
    <scope>NUCLEOTIDE SEQUENCE [LARGE SCALE GENOMIC DNA]</scope>
    <source>
        <strain>GB-1</strain>
    </source>
</reference>
<keyword id="KW-0378">Hydrolase</keyword>
<feature type="chain" id="PRO_1000087581" description="GTP cyclohydrolase FolE2">
    <location>
        <begin position="1"/>
        <end position="301"/>
    </location>
</feature>
<feature type="site" description="May be catalytically important" evidence="1">
    <location>
        <position position="149"/>
    </location>
</feature>
<comment type="function">
    <text evidence="1">Converts GTP to 7,8-dihydroneopterin triphosphate.</text>
</comment>
<comment type="catalytic activity">
    <reaction evidence="1">
        <text>GTP + H2O = 7,8-dihydroneopterin 3'-triphosphate + formate + H(+)</text>
        <dbReference type="Rhea" id="RHEA:17473"/>
        <dbReference type="ChEBI" id="CHEBI:15377"/>
        <dbReference type="ChEBI" id="CHEBI:15378"/>
        <dbReference type="ChEBI" id="CHEBI:15740"/>
        <dbReference type="ChEBI" id="CHEBI:37565"/>
        <dbReference type="ChEBI" id="CHEBI:58462"/>
        <dbReference type="EC" id="3.5.4.16"/>
    </reaction>
</comment>
<comment type="pathway">
    <text evidence="1">Cofactor biosynthesis; 7,8-dihydroneopterin triphosphate biosynthesis; 7,8-dihydroneopterin triphosphate from GTP: step 1/1.</text>
</comment>
<comment type="similarity">
    <text evidence="1">Belongs to the GTP cyclohydrolase IV family.</text>
</comment>
<protein>
    <recommendedName>
        <fullName evidence="1">GTP cyclohydrolase FolE2</fullName>
        <ecNumber evidence="1">3.5.4.16</ecNumber>
    </recommendedName>
</protein>
<dbReference type="EC" id="3.5.4.16" evidence="1"/>
<dbReference type="EMBL" id="CP000926">
    <property type="protein sequence ID" value="ABZ01294.1"/>
    <property type="molecule type" value="Genomic_DNA"/>
</dbReference>
<dbReference type="RefSeq" id="WP_012274891.1">
    <property type="nucleotide sequence ID" value="NC_010322.1"/>
</dbReference>
<dbReference type="SMR" id="B0KR89"/>
<dbReference type="KEGG" id="ppg:PputGB1_5412"/>
<dbReference type="eggNOG" id="COG1469">
    <property type="taxonomic scope" value="Bacteria"/>
</dbReference>
<dbReference type="HOGENOM" id="CLU_062816_0_0_6"/>
<dbReference type="UniPathway" id="UPA00848">
    <property type="reaction ID" value="UER00151"/>
</dbReference>
<dbReference type="Proteomes" id="UP000002157">
    <property type="component" value="Chromosome"/>
</dbReference>
<dbReference type="GO" id="GO:0003934">
    <property type="term" value="F:GTP cyclohydrolase I activity"/>
    <property type="evidence" value="ECO:0007669"/>
    <property type="project" value="UniProtKB-UniRule"/>
</dbReference>
<dbReference type="GO" id="GO:0046654">
    <property type="term" value="P:tetrahydrofolate biosynthetic process"/>
    <property type="evidence" value="ECO:0007669"/>
    <property type="project" value="UniProtKB-UniRule"/>
</dbReference>
<dbReference type="Gene3D" id="3.10.270.10">
    <property type="entry name" value="Urate Oxidase"/>
    <property type="match status" value="1"/>
</dbReference>
<dbReference type="HAMAP" id="MF_01527_B">
    <property type="entry name" value="GTP_cyclohydrol_B"/>
    <property type="match status" value="1"/>
</dbReference>
<dbReference type="InterPro" id="IPR022838">
    <property type="entry name" value="GTP_cyclohydrolase_FolE2"/>
</dbReference>
<dbReference type="InterPro" id="IPR003801">
    <property type="entry name" value="GTP_cyclohydrolase_FolE2/MptA"/>
</dbReference>
<dbReference type="NCBIfam" id="NF010200">
    <property type="entry name" value="PRK13674.1-1"/>
    <property type="match status" value="1"/>
</dbReference>
<dbReference type="PANTHER" id="PTHR36445">
    <property type="entry name" value="GTP CYCLOHYDROLASE MPTA"/>
    <property type="match status" value="1"/>
</dbReference>
<dbReference type="PANTHER" id="PTHR36445:SF1">
    <property type="entry name" value="GTP CYCLOHYDROLASE MPTA"/>
    <property type="match status" value="1"/>
</dbReference>
<dbReference type="Pfam" id="PF02649">
    <property type="entry name" value="GCHY-1"/>
    <property type="match status" value="1"/>
</dbReference>
<accession>B0KR89</accession>
<gene>
    <name evidence="1" type="primary">folE2</name>
    <name type="ordered locus">PputGB1_5412</name>
</gene>